<sequence>MHIRILGSAAGGGFPQWNCNCRNCRGVRDGSVAAQPRTQSSIALSDDGERWILCNASPDIRAQIAAFPALQPARRPRDTAIGAIVLLDSQIDHTTGLLSLREGCPHEVWCTQMVHQDLSEGFPLFPMLSHWNGGLRHRPIALDGEPFAIPACPRLRFTAIPLRSSAPPYSPHRGDPHPGDNIGLFVEDLDSAGALFYAPGLGEVDEALLEWMRRADCLLVDGTLWRDDEMLVCEVGDKLGRQMGHLAQSGPGGMLEVLAKVPAARKVLIHINNTNPILDTASAERAELDASGIEVAWDGMHIQL</sequence>
<dbReference type="EMBL" id="AE004091">
    <property type="protein sequence ID" value="AAG05374.1"/>
    <property type="molecule type" value="Genomic_DNA"/>
</dbReference>
<dbReference type="EMBL" id="AF068264">
    <property type="protein sequence ID" value="AAC79661.1"/>
    <property type="molecule type" value="Genomic_DNA"/>
</dbReference>
<dbReference type="PIR" id="B83397">
    <property type="entry name" value="B83397"/>
</dbReference>
<dbReference type="RefSeq" id="NP_250676.1">
    <property type="nucleotide sequence ID" value="NC_002516.2"/>
</dbReference>
<dbReference type="RefSeq" id="WP_003113495.1">
    <property type="nucleotide sequence ID" value="NZ_QZGE01000026.1"/>
</dbReference>
<dbReference type="SMR" id="Q9I2C3"/>
<dbReference type="STRING" id="208964.PA1986"/>
<dbReference type="PaxDb" id="208964-PA1986"/>
<dbReference type="DNASU" id="880354"/>
<dbReference type="GeneID" id="880354"/>
<dbReference type="KEGG" id="pae:PA1986"/>
<dbReference type="PATRIC" id="fig|208964.12.peg.2070"/>
<dbReference type="PseudoCAP" id="PA1986"/>
<dbReference type="HOGENOM" id="CLU_061120_0_0_6"/>
<dbReference type="InParanoid" id="Q9I2C3"/>
<dbReference type="OrthoDB" id="9778305at2"/>
<dbReference type="PhylomeDB" id="Q9I2C3"/>
<dbReference type="BioCyc" id="PAER208964:G1FZ6-2024-MONOMER"/>
<dbReference type="UniPathway" id="UPA00539"/>
<dbReference type="Proteomes" id="UP000002438">
    <property type="component" value="Chromosome"/>
</dbReference>
<dbReference type="GO" id="GO:0018189">
    <property type="term" value="P:pyrroloquinoline quinone biosynthetic process"/>
    <property type="evidence" value="ECO:0007669"/>
    <property type="project" value="UniProtKB-UniRule"/>
</dbReference>
<dbReference type="CDD" id="cd16274">
    <property type="entry name" value="PQQB-like_MBL-fold"/>
    <property type="match status" value="1"/>
</dbReference>
<dbReference type="Gene3D" id="3.60.15.10">
    <property type="entry name" value="Ribonuclease Z/Hydroxyacylglutathione hydrolase-like"/>
    <property type="match status" value="1"/>
</dbReference>
<dbReference type="HAMAP" id="MF_00653">
    <property type="entry name" value="PQQ_syn_PqqB"/>
    <property type="match status" value="1"/>
</dbReference>
<dbReference type="InterPro" id="IPR001279">
    <property type="entry name" value="Metallo-B-lactamas"/>
</dbReference>
<dbReference type="InterPro" id="IPR011842">
    <property type="entry name" value="PQQ_synth_PqqB"/>
</dbReference>
<dbReference type="InterPro" id="IPR036866">
    <property type="entry name" value="RibonucZ/Hydroxyglut_hydro"/>
</dbReference>
<dbReference type="NCBIfam" id="TIGR02108">
    <property type="entry name" value="PQQ_syn_pqqB"/>
    <property type="match status" value="1"/>
</dbReference>
<dbReference type="PANTHER" id="PTHR42663:SF7">
    <property type="entry name" value="COENZYME PQQ SYNTHESIS PROTEIN B"/>
    <property type="match status" value="1"/>
</dbReference>
<dbReference type="PANTHER" id="PTHR42663">
    <property type="entry name" value="HYDROLASE C777.06C-RELATED-RELATED"/>
    <property type="match status" value="1"/>
</dbReference>
<dbReference type="Pfam" id="PF12706">
    <property type="entry name" value="Lactamase_B_2"/>
    <property type="match status" value="1"/>
</dbReference>
<dbReference type="SUPFAM" id="SSF56281">
    <property type="entry name" value="Metallo-hydrolase/oxidoreductase"/>
    <property type="match status" value="1"/>
</dbReference>
<accession>Q9I2C3</accession>
<accession>Q9ZA99</accession>
<gene>
    <name evidence="1" type="primary">pqqB</name>
    <name type="ordered locus">PA1986</name>
</gene>
<feature type="chain" id="PRO_0000220003" description="Coenzyme PQQ synthesis protein B">
    <location>
        <begin position="1"/>
        <end position="304"/>
    </location>
</feature>
<protein>
    <recommendedName>
        <fullName evidence="1">Coenzyme PQQ synthesis protein B</fullName>
    </recommendedName>
    <alternativeName>
        <fullName evidence="1">Pyrroloquinoline quinone biosynthesis protein B</fullName>
    </alternativeName>
</protein>
<organism>
    <name type="scientific">Pseudomonas aeruginosa (strain ATCC 15692 / DSM 22644 / CIP 104116 / JCM 14847 / LMG 12228 / 1C / PRS 101 / PAO1)</name>
    <dbReference type="NCBI Taxonomy" id="208964"/>
    <lineage>
        <taxon>Bacteria</taxon>
        <taxon>Pseudomonadati</taxon>
        <taxon>Pseudomonadota</taxon>
        <taxon>Gammaproteobacteria</taxon>
        <taxon>Pseudomonadales</taxon>
        <taxon>Pseudomonadaceae</taxon>
        <taxon>Pseudomonas</taxon>
    </lineage>
</organism>
<reference key="1">
    <citation type="journal article" date="2000" name="Nature">
        <title>Complete genome sequence of Pseudomonas aeruginosa PAO1, an opportunistic pathogen.</title>
        <authorList>
            <person name="Stover C.K."/>
            <person name="Pham X.-Q.T."/>
            <person name="Erwin A.L."/>
            <person name="Mizoguchi S.D."/>
            <person name="Warrener P."/>
            <person name="Hickey M.J."/>
            <person name="Brinkman F.S.L."/>
            <person name="Hufnagle W.O."/>
            <person name="Kowalik D.J."/>
            <person name="Lagrou M."/>
            <person name="Garber R.L."/>
            <person name="Goltry L."/>
            <person name="Tolentino E."/>
            <person name="Westbrock-Wadman S."/>
            <person name="Yuan Y."/>
            <person name="Brody L.L."/>
            <person name="Coulter S.N."/>
            <person name="Folger K.R."/>
            <person name="Kas A."/>
            <person name="Larbig K."/>
            <person name="Lim R.M."/>
            <person name="Smith K.A."/>
            <person name="Spencer D.H."/>
            <person name="Wong G.K.-S."/>
            <person name="Wu Z."/>
            <person name="Paulsen I.T."/>
            <person name="Reizer J."/>
            <person name="Saier M.H. Jr."/>
            <person name="Hancock R.E.W."/>
            <person name="Lory S."/>
            <person name="Olson M.V."/>
        </authorList>
    </citation>
    <scope>NUCLEOTIDE SEQUENCE [LARGE SCALE GENOMIC DNA]</scope>
    <source>
        <strain>ATCC 15692 / DSM 22644 / CIP 104116 / JCM 14847 / LMG 12228 / 1C / PRS 101 / PAO1</strain>
    </source>
</reference>
<reference key="2">
    <citation type="journal article" date="1999" name="Microbiology">
        <title>Cytochrome c550 is an essential component of the quinoprotein ethanol oxidation system in Pseudomonas aeruginosa: cloning and sequencing of the genes encoding cytochrome c550 and an adjacent acetaldehyde dehydrogenase.</title>
        <authorList>
            <person name="Schobert M."/>
            <person name="Goerisch H."/>
        </authorList>
    </citation>
    <scope>NUCLEOTIDE SEQUENCE [GENOMIC DNA] OF 1-52</scope>
    <source>
        <strain>ATCC 17933</strain>
    </source>
</reference>
<evidence type="ECO:0000255" key="1">
    <source>
        <dbReference type="HAMAP-Rule" id="MF_00653"/>
    </source>
</evidence>
<keyword id="KW-0884">PQQ biosynthesis</keyword>
<keyword id="KW-1185">Reference proteome</keyword>
<keyword id="KW-0813">Transport</keyword>
<name>PQQB_PSEAE</name>
<proteinExistence type="inferred from homology"/>
<comment type="function">
    <text evidence="1">May be involved in the transport of PQQ or its precursor to the periplasm.</text>
</comment>
<comment type="pathway">
    <text evidence="1">Cofactor biosynthesis; pyrroloquinoline quinone biosynthesis.</text>
</comment>
<comment type="similarity">
    <text evidence="1">Belongs to the PqqB family.</text>
</comment>